<name>HDA_SALPC</name>
<feature type="chain" id="PRO_1000164300" description="DnaA regulatory inactivator Hda">
    <location>
        <begin position="1"/>
        <end position="241"/>
    </location>
</feature>
<dbReference type="EMBL" id="CP000857">
    <property type="protein sequence ID" value="ACN45327.1"/>
    <property type="molecule type" value="Genomic_DNA"/>
</dbReference>
<dbReference type="SMR" id="C0PYR0"/>
<dbReference type="KEGG" id="sei:SPC_1161"/>
<dbReference type="HOGENOM" id="CLU_072265_1_1_6"/>
<dbReference type="Proteomes" id="UP000001599">
    <property type="component" value="Chromosome"/>
</dbReference>
<dbReference type="GO" id="GO:0006270">
    <property type="term" value="P:DNA replication initiation"/>
    <property type="evidence" value="ECO:0007669"/>
    <property type="project" value="TreeGrafter"/>
</dbReference>
<dbReference type="GO" id="GO:0032297">
    <property type="term" value="P:negative regulation of DNA-templated DNA replication initiation"/>
    <property type="evidence" value="ECO:0007669"/>
    <property type="project" value="InterPro"/>
</dbReference>
<dbReference type="FunFam" id="1.10.8.60:FF:000024">
    <property type="entry name" value="DnaA regulatory inactivator Hda"/>
    <property type="match status" value="1"/>
</dbReference>
<dbReference type="FunFam" id="3.40.50.300:FF:000452">
    <property type="entry name" value="DnaA regulatory inactivator Hda"/>
    <property type="match status" value="1"/>
</dbReference>
<dbReference type="Gene3D" id="1.10.8.60">
    <property type="match status" value="1"/>
</dbReference>
<dbReference type="Gene3D" id="3.40.50.300">
    <property type="entry name" value="P-loop containing nucleotide triphosphate hydrolases"/>
    <property type="match status" value="1"/>
</dbReference>
<dbReference type="HAMAP" id="MF_01158">
    <property type="entry name" value="Hda"/>
    <property type="match status" value="1"/>
</dbReference>
<dbReference type="InterPro" id="IPR020591">
    <property type="entry name" value="Chromosome_initiator_DnaA-like"/>
</dbReference>
<dbReference type="InterPro" id="IPR013317">
    <property type="entry name" value="DnaA_dom"/>
</dbReference>
<dbReference type="InterPro" id="IPR017788">
    <property type="entry name" value="Hda"/>
</dbReference>
<dbReference type="InterPro" id="IPR022864">
    <property type="entry name" value="Hda_Enterobact"/>
</dbReference>
<dbReference type="InterPro" id="IPR055199">
    <property type="entry name" value="Hda_lid"/>
</dbReference>
<dbReference type="InterPro" id="IPR027417">
    <property type="entry name" value="P-loop_NTPase"/>
</dbReference>
<dbReference type="NCBIfam" id="TIGR03420">
    <property type="entry name" value="DnaA_homol_Hda"/>
    <property type="match status" value="1"/>
</dbReference>
<dbReference type="NCBIfam" id="NF005982">
    <property type="entry name" value="PRK08084.1"/>
    <property type="match status" value="1"/>
</dbReference>
<dbReference type="PANTHER" id="PTHR30050">
    <property type="entry name" value="CHROMOSOMAL REPLICATION INITIATOR PROTEIN DNAA"/>
    <property type="match status" value="1"/>
</dbReference>
<dbReference type="PANTHER" id="PTHR30050:SF5">
    <property type="entry name" value="DNAA REGULATORY INACTIVATOR HDA"/>
    <property type="match status" value="1"/>
</dbReference>
<dbReference type="Pfam" id="PF00308">
    <property type="entry name" value="Bac_DnaA"/>
    <property type="match status" value="1"/>
</dbReference>
<dbReference type="Pfam" id="PF22688">
    <property type="entry name" value="Hda_lid"/>
    <property type="match status" value="1"/>
</dbReference>
<dbReference type="PRINTS" id="PR00051">
    <property type="entry name" value="DNAA"/>
</dbReference>
<dbReference type="SUPFAM" id="SSF52540">
    <property type="entry name" value="P-loop containing nucleoside triphosphate hydrolases"/>
    <property type="match status" value="1"/>
</dbReference>
<comment type="function">
    <text evidence="1">Mediates the interaction of DNA replication initiator protein DnaA with DNA polymerase subunit beta sliding clamp (dnaN). Stimulates hydrolysis of ATP-DnaA to ADP-DnaA, rendering DnaA inactive for reinitiation, a process called regulatory inhibition of DnaA or RIDA (By similarity).</text>
</comment>
<comment type="subunit">
    <text evidence="2">The active form seems to be an ADP-bound monomer. Forms the RIDA complex (regulatory inactivation of DnaA) of ATP-DnaA, ADP-Hda and the DNA-loaded beta sliding clamp (dnaN).</text>
</comment>
<comment type="similarity">
    <text evidence="2">Belongs to the DnaA family. HdA subfamily.</text>
</comment>
<sequence length="241" mass="27472">MSSWVEVSLNTPAQLSLPLYLPDDETFASFWPGDNASLLAALQNVLRQEHSGYIYLWAREGAGRSHLLHAACAELSQRGDAVGYVPLDKRTWFVPEVLDGMEHLSLVCIDNIECVAGDELWEMAIFDLYNRILESGKTRLLITGDRPPRQLNLGLPDLASRLDWGQIYKLQPLSDEDKLQALQLRARLRGFELPEDVGRFLLKRLDREMRTLFMTLDQLDHASITAQRKLTIPFVKEILKL</sequence>
<organism>
    <name type="scientific">Salmonella paratyphi C (strain RKS4594)</name>
    <dbReference type="NCBI Taxonomy" id="476213"/>
    <lineage>
        <taxon>Bacteria</taxon>
        <taxon>Pseudomonadati</taxon>
        <taxon>Pseudomonadota</taxon>
        <taxon>Gammaproteobacteria</taxon>
        <taxon>Enterobacterales</taxon>
        <taxon>Enterobacteriaceae</taxon>
        <taxon>Salmonella</taxon>
    </lineage>
</organism>
<accession>C0PYR0</accession>
<proteinExistence type="inferred from homology"/>
<evidence type="ECO:0000250" key="1"/>
<evidence type="ECO:0000255" key="2">
    <source>
        <dbReference type="HAMAP-Rule" id="MF_01158"/>
    </source>
</evidence>
<protein>
    <recommendedName>
        <fullName evidence="2">DnaA regulatory inactivator Hda</fullName>
    </recommendedName>
</protein>
<reference key="1">
    <citation type="journal article" date="2009" name="PLoS ONE">
        <title>Salmonella paratyphi C: genetic divergence from Salmonella choleraesuis and pathogenic convergence with Salmonella typhi.</title>
        <authorList>
            <person name="Liu W.-Q."/>
            <person name="Feng Y."/>
            <person name="Wang Y."/>
            <person name="Zou Q.-H."/>
            <person name="Chen F."/>
            <person name="Guo J.-T."/>
            <person name="Peng Y.-H."/>
            <person name="Jin Y."/>
            <person name="Li Y.-G."/>
            <person name="Hu S.-N."/>
            <person name="Johnston R.N."/>
            <person name="Liu G.-R."/>
            <person name="Liu S.-L."/>
        </authorList>
    </citation>
    <scope>NUCLEOTIDE SEQUENCE [LARGE SCALE GENOMIC DNA]</scope>
    <source>
        <strain>RKS4594</strain>
    </source>
</reference>
<gene>
    <name evidence="2" type="primary">hda</name>
    <name type="ordered locus">SPC_1161</name>
</gene>
<keyword id="KW-0235">DNA replication</keyword>
<keyword id="KW-0236">DNA replication inhibitor</keyword>